<reference key="1">
    <citation type="journal article" date="1995" name="J. Muscle Res. Cell Motil.">
        <title>Essential light chain of Drosophila nonmuscle myosin II.</title>
        <authorList>
            <person name="Edwards K.A."/>
            <person name="Chang X."/>
            <person name="Kiehart D.P."/>
        </authorList>
    </citation>
    <scope>NUCLEOTIDE SEQUENCE [MRNA]</scope>
</reference>
<reference key="2">
    <citation type="journal article" date="2000" name="Science">
        <title>The genome sequence of Drosophila melanogaster.</title>
        <authorList>
            <person name="Adams M.D."/>
            <person name="Celniker S.E."/>
            <person name="Holt R.A."/>
            <person name="Evans C.A."/>
            <person name="Gocayne J.D."/>
            <person name="Amanatides P.G."/>
            <person name="Scherer S.E."/>
            <person name="Li P.W."/>
            <person name="Hoskins R.A."/>
            <person name="Galle R.F."/>
            <person name="George R.A."/>
            <person name="Lewis S.E."/>
            <person name="Richards S."/>
            <person name="Ashburner M."/>
            <person name="Henderson S.N."/>
            <person name="Sutton G.G."/>
            <person name="Wortman J.R."/>
            <person name="Yandell M.D."/>
            <person name="Zhang Q."/>
            <person name="Chen L.X."/>
            <person name="Brandon R.C."/>
            <person name="Rogers Y.-H.C."/>
            <person name="Blazej R.G."/>
            <person name="Champe M."/>
            <person name="Pfeiffer B.D."/>
            <person name="Wan K.H."/>
            <person name="Doyle C."/>
            <person name="Baxter E.G."/>
            <person name="Helt G."/>
            <person name="Nelson C.R."/>
            <person name="Miklos G.L.G."/>
            <person name="Abril J.F."/>
            <person name="Agbayani A."/>
            <person name="An H.-J."/>
            <person name="Andrews-Pfannkoch C."/>
            <person name="Baldwin D."/>
            <person name="Ballew R.M."/>
            <person name="Basu A."/>
            <person name="Baxendale J."/>
            <person name="Bayraktaroglu L."/>
            <person name="Beasley E.M."/>
            <person name="Beeson K.Y."/>
            <person name="Benos P.V."/>
            <person name="Berman B.P."/>
            <person name="Bhandari D."/>
            <person name="Bolshakov S."/>
            <person name="Borkova D."/>
            <person name="Botchan M.R."/>
            <person name="Bouck J."/>
            <person name="Brokstein P."/>
            <person name="Brottier P."/>
            <person name="Burtis K.C."/>
            <person name="Busam D.A."/>
            <person name="Butler H."/>
            <person name="Cadieu E."/>
            <person name="Center A."/>
            <person name="Chandra I."/>
            <person name="Cherry J.M."/>
            <person name="Cawley S."/>
            <person name="Dahlke C."/>
            <person name="Davenport L.B."/>
            <person name="Davies P."/>
            <person name="de Pablos B."/>
            <person name="Delcher A."/>
            <person name="Deng Z."/>
            <person name="Mays A.D."/>
            <person name="Dew I."/>
            <person name="Dietz S.M."/>
            <person name="Dodson K."/>
            <person name="Doup L.E."/>
            <person name="Downes M."/>
            <person name="Dugan-Rocha S."/>
            <person name="Dunkov B.C."/>
            <person name="Dunn P."/>
            <person name="Durbin K.J."/>
            <person name="Evangelista C.C."/>
            <person name="Ferraz C."/>
            <person name="Ferriera S."/>
            <person name="Fleischmann W."/>
            <person name="Fosler C."/>
            <person name="Gabrielian A.E."/>
            <person name="Garg N.S."/>
            <person name="Gelbart W.M."/>
            <person name="Glasser K."/>
            <person name="Glodek A."/>
            <person name="Gong F."/>
            <person name="Gorrell J.H."/>
            <person name="Gu Z."/>
            <person name="Guan P."/>
            <person name="Harris M."/>
            <person name="Harris N.L."/>
            <person name="Harvey D.A."/>
            <person name="Heiman T.J."/>
            <person name="Hernandez J.R."/>
            <person name="Houck J."/>
            <person name="Hostin D."/>
            <person name="Houston K.A."/>
            <person name="Howland T.J."/>
            <person name="Wei M.-H."/>
            <person name="Ibegwam C."/>
            <person name="Jalali M."/>
            <person name="Kalush F."/>
            <person name="Karpen G.H."/>
            <person name="Ke Z."/>
            <person name="Kennison J.A."/>
            <person name="Ketchum K.A."/>
            <person name="Kimmel B.E."/>
            <person name="Kodira C.D."/>
            <person name="Kraft C.L."/>
            <person name="Kravitz S."/>
            <person name="Kulp D."/>
            <person name="Lai Z."/>
            <person name="Lasko P."/>
            <person name="Lei Y."/>
            <person name="Levitsky A.A."/>
            <person name="Li J.H."/>
            <person name="Li Z."/>
            <person name="Liang Y."/>
            <person name="Lin X."/>
            <person name="Liu X."/>
            <person name="Mattei B."/>
            <person name="McIntosh T.C."/>
            <person name="McLeod M.P."/>
            <person name="McPherson D."/>
            <person name="Merkulov G."/>
            <person name="Milshina N.V."/>
            <person name="Mobarry C."/>
            <person name="Morris J."/>
            <person name="Moshrefi A."/>
            <person name="Mount S.M."/>
            <person name="Moy M."/>
            <person name="Murphy B."/>
            <person name="Murphy L."/>
            <person name="Muzny D.M."/>
            <person name="Nelson D.L."/>
            <person name="Nelson D.R."/>
            <person name="Nelson K.A."/>
            <person name="Nixon K."/>
            <person name="Nusskern D.R."/>
            <person name="Pacleb J.M."/>
            <person name="Palazzolo M."/>
            <person name="Pittman G.S."/>
            <person name="Pan S."/>
            <person name="Pollard J."/>
            <person name="Puri V."/>
            <person name="Reese M.G."/>
            <person name="Reinert K."/>
            <person name="Remington K."/>
            <person name="Saunders R.D.C."/>
            <person name="Scheeler F."/>
            <person name="Shen H."/>
            <person name="Shue B.C."/>
            <person name="Siden-Kiamos I."/>
            <person name="Simpson M."/>
            <person name="Skupski M.P."/>
            <person name="Smith T.J."/>
            <person name="Spier E."/>
            <person name="Spradling A.C."/>
            <person name="Stapleton M."/>
            <person name="Strong R."/>
            <person name="Sun E."/>
            <person name="Svirskas R."/>
            <person name="Tector C."/>
            <person name="Turner R."/>
            <person name="Venter E."/>
            <person name="Wang A.H."/>
            <person name="Wang X."/>
            <person name="Wang Z.-Y."/>
            <person name="Wassarman D.A."/>
            <person name="Weinstock G.M."/>
            <person name="Weissenbach J."/>
            <person name="Williams S.M."/>
            <person name="Woodage T."/>
            <person name="Worley K.C."/>
            <person name="Wu D."/>
            <person name="Yang S."/>
            <person name="Yao Q.A."/>
            <person name="Ye J."/>
            <person name="Yeh R.-F."/>
            <person name="Zaveri J.S."/>
            <person name="Zhan M."/>
            <person name="Zhang G."/>
            <person name="Zhao Q."/>
            <person name="Zheng L."/>
            <person name="Zheng X.H."/>
            <person name="Zhong F.N."/>
            <person name="Zhong W."/>
            <person name="Zhou X."/>
            <person name="Zhu S.C."/>
            <person name="Zhu X."/>
            <person name="Smith H.O."/>
            <person name="Gibbs R.A."/>
            <person name="Myers E.W."/>
            <person name="Rubin G.M."/>
            <person name="Venter J.C."/>
        </authorList>
    </citation>
    <scope>NUCLEOTIDE SEQUENCE [LARGE SCALE GENOMIC DNA]</scope>
    <source>
        <strain>Berkeley</strain>
    </source>
</reference>
<reference key="3">
    <citation type="journal article" date="2002" name="Genome Biol.">
        <title>Annotation of the Drosophila melanogaster euchromatic genome: a systematic review.</title>
        <authorList>
            <person name="Misra S."/>
            <person name="Crosby M.A."/>
            <person name="Mungall C.J."/>
            <person name="Matthews B.B."/>
            <person name="Campbell K.S."/>
            <person name="Hradecky P."/>
            <person name="Huang Y."/>
            <person name="Kaminker J.S."/>
            <person name="Millburn G.H."/>
            <person name="Prochnik S.E."/>
            <person name="Smith C.D."/>
            <person name="Tupy J.L."/>
            <person name="Whitfield E.J."/>
            <person name="Bayraktaroglu L."/>
            <person name="Berman B.P."/>
            <person name="Bettencourt B.R."/>
            <person name="Celniker S.E."/>
            <person name="de Grey A.D.N.J."/>
            <person name="Drysdale R.A."/>
            <person name="Harris N.L."/>
            <person name="Richter J."/>
            <person name="Russo S."/>
            <person name="Schroeder A.J."/>
            <person name="Shu S.Q."/>
            <person name="Stapleton M."/>
            <person name="Yamada C."/>
            <person name="Ashburner M."/>
            <person name="Gelbart W.M."/>
            <person name="Rubin G.M."/>
            <person name="Lewis S.E."/>
        </authorList>
    </citation>
    <scope>GENOME REANNOTATION</scope>
    <source>
        <strain>Berkeley</strain>
    </source>
</reference>
<reference key="4">
    <citation type="submission" date="2009-04" db="EMBL/GenBank/DDBJ databases">
        <authorList>
            <person name="Carlson J.W."/>
            <person name="Booth B."/>
            <person name="Frise E."/>
            <person name="Park S."/>
            <person name="Wan K.H."/>
            <person name="Yu C."/>
            <person name="Celniker S.E."/>
        </authorList>
    </citation>
    <scope>NUCLEOTIDE SEQUENCE [LARGE SCALE MRNA]</scope>
    <source>
        <strain>Berkeley</strain>
    </source>
</reference>
<reference key="5">
    <citation type="journal article" date="2007" name="Mol. Biosyst.">
        <title>An integrated chemical, mass spectrometric and computational strategy for (quantitative) phosphoproteomics: application to Drosophila melanogaster Kc167 cells.</title>
        <authorList>
            <person name="Bodenmiller B."/>
            <person name="Mueller L.N."/>
            <person name="Pedrioli P.G.A."/>
            <person name="Pflieger D."/>
            <person name="Juenger M.A."/>
            <person name="Eng J.K."/>
            <person name="Aebersold R."/>
            <person name="Tao W.A."/>
        </authorList>
    </citation>
    <scope>PHOSPHORYLATION [LARGE SCALE ANALYSIS] AT SER-30</scope>
    <scope>IDENTIFICATION BY MASS SPECTROMETRY</scope>
</reference>
<comment type="subunit">
    <text evidence="1">Myosin is a hexamer of 2 heavy chains and 4 light chains.</text>
</comment>
<keyword id="KW-0106">Calcium</keyword>
<keyword id="KW-0479">Metal-binding</keyword>
<keyword id="KW-0505">Motor protein</keyword>
<keyword id="KW-0518">Myosin</keyword>
<keyword id="KW-0597">Phosphoprotein</keyword>
<keyword id="KW-1185">Reference proteome</keyword>
<keyword id="KW-0677">Repeat</keyword>
<proteinExistence type="evidence at protein level"/>
<sequence>MAAYTEDQLAEFQEAFNLFDNRGDGKIQLSQVGECLRALGQNPTESDVKKCTHQLKPDERISFEVFLPIYQAISKARSGDTADDFIEGLRHFDKDASGYISSAELRHLLTTLGEKLTDEEVEQLLANMEDQQGNINYEEFVRMVMSG</sequence>
<feature type="chain" id="PRO_0000198717" description="Myosin-2 essential light chain">
    <location>
        <begin position="1"/>
        <end position="147"/>
    </location>
</feature>
<feature type="domain" description="EF-hand 1" evidence="2">
    <location>
        <begin position="7"/>
        <end position="42"/>
    </location>
</feature>
<feature type="domain" description="EF-hand 2" evidence="2">
    <location>
        <begin position="80"/>
        <end position="115"/>
    </location>
</feature>
<feature type="domain" description="EF-hand 3" evidence="2">
    <location>
        <begin position="115"/>
        <end position="147"/>
    </location>
</feature>
<feature type="binding site" evidence="2">
    <location>
        <position position="93"/>
    </location>
    <ligand>
        <name>Ca(2+)</name>
        <dbReference type="ChEBI" id="CHEBI:29108"/>
    </ligand>
</feature>
<feature type="binding site" evidence="2">
    <location>
        <position position="95"/>
    </location>
    <ligand>
        <name>Ca(2+)</name>
        <dbReference type="ChEBI" id="CHEBI:29108"/>
    </ligand>
</feature>
<feature type="binding site" evidence="2">
    <location>
        <position position="97"/>
    </location>
    <ligand>
        <name>Ca(2+)</name>
        <dbReference type="ChEBI" id="CHEBI:29108"/>
    </ligand>
</feature>
<feature type="binding site" evidence="2">
    <location>
        <position position="99"/>
    </location>
    <ligand>
        <name>Ca(2+)</name>
        <dbReference type="ChEBI" id="CHEBI:29108"/>
    </ligand>
</feature>
<feature type="binding site" evidence="2">
    <location>
        <position position="104"/>
    </location>
    <ligand>
        <name>Ca(2+)</name>
        <dbReference type="ChEBI" id="CHEBI:29108"/>
    </ligand>
</feature>
<feature type="modified residue" description="Phosphoserine" evidence="3">
    <location>
        <position position="30"/>
    </location>
</feature>
<name>MLC2_DROME</name>
<protein>
    <recommendedName>
        <fullName>Myosin-2 essential light chain</fullName>
    </recommendedName>
    <alternativeName>
        <fullName>Myosin II essential light chain</fullName>
    </alternativeName>
    <alternativeName>
        <fullName>Non-muscle myosin essential light chain</fullName>
    </alternativeName>
</protein>
<evidence type="ECO:0000250" key="1"/>
<evidence type="ECO:0000255" key="2">
    <source>
        <dbReference type="PROSITE-ProRule" id="PRU00448"/>
    </source>
</evidence>
<evidence type="ECO:0000269" key="3">
    <source>
    </source>
</evidence>
<accession>P54357</accession>
<accession>C1C594</accession>
<accession>Q9W4A8</accession>
<gene>
    <name type="primary">Mlc-c</name>
    <name type="ORF">CG3201</name>
</gene>
<dbReference type="EMBL" id="U25057">
    <property type="protein sequence ID" value="AAA84897.1"/>
    <property type="molecule type" value="mRNA"/>
</dbReference>
<dbReference type="EMBL" id="AE014298">
    <property type="protein sequence ID" value="AAF46048.1"/>
    <property type="molecule type" value="Genomic_DNA"/>
</dbReference>
<dbReference type="EMBL" id="BT082023">
    <property type="protein sequence ID" value="ACO72860.1"/>
    <property type="molecule type" value="mRNA"/>
</dbReference>
<dbReference type="RefSeq" id="NP_511049.1">
    <property type="nucleotide sequence ID" value="NM_078494.4"/>
</dbReference>
<dbReference type="SMR" id="P54357"/>
<dbReference type="BioGRID" id="57980">
    <property type="interactions" value="28"/>
</dbReference>
<dbReference type="DIP" id="DIP-19766N"/>
<dbReference type="FunCoup" id="P54357">
    <property type="interactions" value="462"/>
</dbReference>
<dbReference type="IntAct" id="P54357">
    <property type="interactions" value="8"/>
</dbReference>
<dbReference type="STRING" id="7227.FBpp0300803"/>
<dbReference type="iPTMnet" id="P54357"/>
<dbReference type="PaxDb" id="7227-FBpp0300803"/>
<dbReference type="DNASU" id="31474"/>
<dbReference type="EnsemblMetazoa" id="FBtr0070783">
    <property type="protein sequence ID" value="FBpp0070749"/>
    <property type="gene ID" value="FBgn0004687"/>
</dbReference>
<dbReference type="GeneID" id="31474"/>
<dbReference type="KEGG" id="dme:Dmel_CG3201"/>
<dbReference type="AGR" id="FB:FBgn0004687"/>
<dbReference type="CTD" id="31474"/>
<dbReference type="FlyBase" id="FBgn0004687">
    <property type="gene designation" value="Mlc-c"/>
</dbReference>
<dbReference type="VEuPathDB" id="VectorBase:FBgn0004687"/>
<dbReference type="eggNOG" id="KOG0030">
    <property type="taxonomic scope" value="Eukaryota"/>
</dbReference>
<dbReference type="GeneTree" id="ENSGT01030000234570"/>
<dbReference type="HOGENOM" id="CLU_061288_13_0_1"/>
<dbReference type="InParanoid" id="P54357"/>
<dbReference type="OrthoDB" id="5959761at2759"/>
<dbReference type="PhylomeDB" id="P54357"/>
<dbReference type="Reactome" id="R-DME-350480">
    <property type="pathway name" value="Activation of non-muscle Myosin II"/>
</dbReference>
<dbReference type="Reactome" id="R-DME-445355">
    <property type="pathway name" value="Smooth Muscle Contraction"/>
</dbReference>
<dbReference type="Reactome" id="R-DME-5627123">
    <property type="pathway name" value="RHO GTPases activate PAKs"/>
</dbReference>
<dbReference type="SignaLink" id="P54357"/>
<dbReference type="BioGRID-ORCS" id="31474">
    <property type="hits" value="0 hits in 3 CRISPR screens"/>
</dbReference>
<dbReference type="GenomeRNAi" id="31474"/>
<dbReference type="PRO" id="PR:P54357"/>
<dbReference type="Proteomes" id="UP000000803">
    <property type="component" value="Chromosome X"/>
</dbReference>
<dbReference type="Bgee" id="FBgn0004687">
    <property type="expression patterns" value="Expressed in wing disc and 236 other cell types or tissues"/>
</dbReference>
<dbReference type="ExpressionAtlas" id="P54357">
    <property type="expression patterns" value="baseline and differential"/>
</dbReference>
<dbReference type="GO" id="GO:0005829">
    <property type="term" value="C:cytosol"/>
    <property type="evidence" value="ECO:0000304"/>
    <property type="project" value="Reactome"/>
</dbReference>
<dbReference type="GO" id="GO:0016460">
    <property type="term" value="C:myosin II complex"/>
    <property type="evidence" value="ECO:0000353"/>
    <property type="project" value="FlyBase"/>
</dbReference>
<dbReference type="GO" id="GO:0031475">
    <property type="term" value="C:myosin V complex"/>
    <property type="evidence" value="ECO:0000353"/>
    <property type="project" value="FlyBase"/>
</dbReference>
<dbReference type="GO" id="GO:0031476">
    <property type="term" value="C:myosin VI complex"/>
    <property type="evidence" value="ECO:0000353"/>
    <property type="project" value="FlyBase"/>
</dbReference>
<dbReference type="GO" id="GO:0031477">
    <property type="term" value="C:myosin VII complex"/>
    <property type="evidence" value="ECO:0000353"/>
    <property type="project" value="FlyBase"/>
</dbReference>
<dbReference type="GO" id="GO:0005509">
    <property type="term" value="F:calcium ion binding"/>
    <property type="evidence" value="ECO:0007669"/>
    <property type="project" value="InterPro"/>
</dbReference>
<dbReference type="GO" id="GO:0017022">
    <property type="term" value="F:myosin binding"/>
    <property type="evidence" value="ECO:0000353"/>
    <property type="project" value="FlyBase"/>
</dbReference>
<dbReference type="GO" id="GO:0032036">
    <property type="term" value="F:myosin heavy chain binding"/>
    <property type="evidence" value="ECO:0000353"/>
    <property type="project" value="FlyBase"/>
</dbReference>
<dbReference type="GO" id="GO:0030048">
    <property type="term" value="P:actin filament-based movement"/>
    <property type="evidence" value="ECO:0000314"/>
    <property type="project" value="FlyBase"/>
</dbReference>
<dbReference type="CDD" id="cd00051">
    <property type="entry name" value="EFh"/>
    <property type="match status" value="1"/>
</dbReference>
<dbReference type="FunFam" id="1.10.238.10:FF:000082">
    <property type="entry name" value="Myosin light chain 1"/>
    <property type="match status" value="1"/>
</dbReference>
<dbReference type="FunFam" id="1.10.238.10:FF:000295">
    <property type="entry name" value="Myosin-2 essential light chain"/>
    <property type="match status" value="1"/>
</dbReference>
<dbReference type="Gene3D" id="1.10.238.10">
    <property type="entry name" value="EF-hand"/>
    <property type="match status" value="2"/>
</dbReference>
<dbReference type="InterPro" id="IPR050230">
    <property type="entry name" value="CALM/Myosin/TropC-like"/>
</dbReference>
<dbReference type="InterPro" id="IPR011992">
    <property type="entry name" value="EF-hand-dom_pair"/>
</dbReference>
<dbReference type="InterPro" id="IPR018247">
    <property type="entry name" value="EF_Hand_1_Ca_BS"/>
</dbReference>
<dbReference type="InterPro" id="IPR002048">
    <property type="entry name" value="EF_hand_dom"/>
</dbReference>
<dbReference type="PANTHER" id="PTHR23048:SF49">
    <property type="entry name" value="FI08416P-RELATED"/>
    <property type="match status" value="1"/>
</dbReference>
<dbReference type="PANTHER" id="PTHR23048">
    <property type="entry name" value="MYOSIN LIGHT CHAIN 1, 3"/>
    <property type="match status" value="1"/>
</dbReference>
<dbReference type="Pfam" id="PF13405">
    <property type="entry name" value="EF-hand_6"/>
    <property type="match status" value="1"/>
</dbReference>
<dbReference type="Pfam" id="PF13499">
    <property type="entry name" value="EF-hand_7"/>
    <property type="match status" value="1"/>
</dbReference>
<dbReference type="SMART" id="SM00054">
    <property type="entry name" value="EFh"/>
    <property type="match status" value="3"/>
</dbReference>
<dbReference type="SUPFAM" id="SSF47473">
    <property type="entry name" value="EF-hand"/>
    <property type="match status" value="1"/>
</dbReference>
<dbReference type="PROSITE" id="PS00018">
    <property type="entry name" value="EF_HAND_1"/>
    <property type="match status" value="1"/>
</dbReference>
<dbReference type="PROSITE" id="PS50222">
    <property type="entry name" value="EF_HAND_2"/>
    <property type="match status" value="3"/>
</dbReference>
<organism>
    <name type="scientific">Drosophila melanogaster</name>
    <name type="common">Fruit fly</name>
    <dbReference type="NCBI Taxonomy" id="7227"/>
    <lineage>
        <taxon>Eukaryota</taxon>
        <taxon>Metazoa</taxon>
        <taxon>Ecdysozoa</taxon>
        <taxon>Arthropoda</taxon>
        <taxon>Hexapoda</taxon>
        <taxon>Insecta</taxon>
        <taxon>Pterygota</taxon>
        <taxon>Neoptera</taxon>
        <taxon>Endopterygota</taxon>
        <taxon>Diptera</taxon>
        <taxon>Brachycera</taxon>
        <taxon>Muscomorpha</taxon>
        <taxon>Ephydroidea</taxon>
        <taxon>Drosophilidae</taxon>
        <taxon>Drosophila</taxon>
        <taxon>Sophophora</taxon>
    </lineage>
</organism>